<dbReference type="EC" id="7.6.2.-" evidence="1"/>
<dbReference type="EMBL" id="AE002098">
    <property type="protein sequence ID" value="AAF41615.1"/>
    <property type="molecule type" value="Genomic_DNA"/>
</dbReference>
<dbReference type="PIR" id="C81107">
    <property type="entry name" value="C81107"/>
</dbReference>
<dbReference type="RefSeq" id="NP_274258.1">
    <property type="nucleotide sequence ID" value="NC_003112.2"/>
</dbReference>
<dbReference type="RefSeq" id="WP_002225197.1">
    <property type="nucleotide sequence ID" value="NC_003112.2"/>
</dbReference>
<dbReference type="SMR" id="P57031"/>
<dbReference type="FunCoup" id="P57031">
    <property type="interactions" value="288"/>
</dbReference>
<dbReference type="STRING" id="122586.NMB1234"/>
<dbReference type="PaxDb" id="122586-NMB1234"/>
<dbReference type="KEGG" id="nme:NMB1234"/>
<dbReference type="PATRIC" id="fig|122586.8.peg.1544"/>
<dbReference type="HOGENOM" id="CLU_000604_1_22_4"/>
<dbReference type="InParanoid" id="P57031"/>
<dbReference type="OrthoDB" id="581709at2"/>
<dbReference type="Proteomes" id="UP000000425">
    <property type="component" value="Chromosome"/>
</dbReference>
<dbReference type="GO" id="GO:0005886">
    <property type="term" value="C:plasma membrane"/>
    <property type="evidence" value="ECO:0007669"/>
    <property type="project" value="UniProtKB-SubCell"/>
</dbReference>
<dbReference type="GO" id="GO:0005524">
    <property type="term" value="F:ATP binding"/>
    <property type="evidence" value="ECO:0007669"/>
    <property type="project" value="UniProtKB-KW"/>
</dbReference>
<dbReference type="GO" id="GO:0016887">
    <property type="term" value="F:ATP hydrolysis activity"/>
    <property type="evidence" value="ECO:0007669"/>
    <property type="project" value="InterPro"/>
</dbReference>
<dbReference type="GO" id="GO:0044873">
    <property type="term" value="P:lipoprotein localization to membrane"/>
    <property type="evidence" value="ECO:0007669"/>
    <property type="project" value="InterPro"/>
</dbReference>
<dbReference type="CDD" id="cd03255">
    <property type="entry name" value="ABC_MJ0796_LolCDE_FtsE"/>
    <property type="match status" value="1"/>
</dbReference>
<dbReference type="FunFam" id="3.40.50.300:FF:000230">
    <property type="entry name" value="Lipoprotein-releasing system ATP-binding protein LolD"/>
    <property type="match status" value="1"/>
</dbReference>
<dbReference type="Gene3D" id="3.40.50.300">
    <property type="entry name" value="P-loop containing nucleotide triphosphate hydrolases"/>
    <property type="match status" value="1"/>
</dbReference>
<dbReference type="InterPro" id="IPR003593">
    <property type="entry name" value="AAA+_ATPase"/>
</dbReference>
<dbReference type="InterPro" id="IPR003439">
    <property type="entry name" value="ABC_transporter-like_ATP-bd"/>
</dbReference>
<dbReference type="InterPro" id="IPR017871">
    <property type="entry name" value="ABC_transporter-like_CS"/>
</dbReference>
<dbReference type="InterPro" id="IPR015854">
    <property type="entry name" value="ABC_transpr_LolD-like"/>
</dbReference>
<dbReference type="InterPro" id="IPR011924">
    <property type="entry name" value="LolD_lipo_ATP-bd"/>
</dbReference>
<dbReference type="InterPro" id="IPR017911">
    <property type="entry name" value="MacB-like_ATP-bd"/>
</dbReference>
<dbReference type="InterPro" id="IPR027417">
    <property type="entry name" value="P-loop_NTPase"/>
</dbReference>
<dbReference type="NCBIfam" id="TIGR02211">
    <property type="entry name" value="LolD_lipo_ex"/>
    <property type="match status" value="1"/>
</dbReference>
<dbReference type="PANTHER" id="PTHR24220">
    <property type="entry name" value="IMPORT ATP-BINDING PROTEIN"/>
    <property type="match status" value="1"/>
</dbReference>
<dbReference type="PANTHER" id="PTHR24220:SF689">
    <property type="entry name" value="LIPOPROTEIN-RELEASING SYSTEM ATP-BINDING PROTEIN LOLD"/>
    <property type="match status" value="1"/>
</dbReference>
<dbReference type="Pfam" id="PF00005">
    <property type="entry name" value="ABC_tran"/>
    <property type="match status" value="1"/>
</dbReference>
<dbReference type="SMART" id="SM00382">
    <property type="entry name" value="AAA"/>
    <property type="match status" value="1"/>
</dbReference>
<dbReference type="SUPFAM" id="SSF52540">
    <property type="entry name" value="P-loop containing nucleoside triphosphate hydrolases"/>
    <property type="match status" value="1"/>
</dbReference>
<dbReference type="PROSITE" id="PS00211">
    <property type="entry name" value="ABC_TRANSPORTER_1"/>
    <property type="match status" value="1"/>
</dbReference>
<dbReference type="PROSITE" id="PS50893">
    <property type="entry name" value="ABC_TRANSPORTER_2"/>
    <property type="match status" value="1"/>
</dbReference>
<dbReference type="PROSITE" id="PS51244">
    <property type="entry name" value="LOLD"/>
    <property type="match status" value="1"/>
</dbReference>
<name>LOLD_NEIMB</name>
<protein>
    <recommendedName>
        <fullName evidence="1">Lipoprotein-releasing system ATP-binding protein LolD</fullName>
        <ecNumber evidence="1">7.6.2.-</ecNumber>
    </recommendedName>
</protein>
<reference key="1">
    <citation type="journal article" date="2000" name="Science">
        <title>Complete genome sequence of Neisseria meningitidis serogroup B strain MC58.</title>
        <authorList>
            <person name="Tettelin H."/>
            <person name="Saunders N.J."/>
            <person name="Heidelberg J.F."/>
            <person name="Jeffries A.C."/>
            <person name="Nelson K.E."/>
            <person name="Eisen J.A."/>
            <person name="Ketchum K.A."/>
            <person name="Hood D.W."/>
            <person name="Peden J.F."/>
            <person name="Dodson R.J."/>
            <person name="Nelson W.C."/>
            <person name="Gwinn M.L."/>
            <person name="DeBoy R.T."/>
            <person name="Peterson J.D."/>
            <person name="Hickey E.K."/>
            <person name="Haft D.H."/>
            <person name="Salzberg S.L."/>
            <person name="White O."/>
            <person name="Fleischmann R.D."/>
            <person name="Dougherty B.A."/>
            <person name="Mason T.M."/>
            <person name="Ciecko A."/>
            <person name="Parksey D.S."/>
            <person name="Blair E."/>
            <person name="Cittone H."/>
            <person name="Clark E.B."/>
            <person name="Cotton M.D."/>
            <person name="Utterback T.R."/>
            <person name="Khouri H.M."/>
            <person name="Qin H."/>
            <person name="Vamathevan J.J."/>
            <person name="Gill J."/>
            <person name="Scarlato V."/>
            <person name="Masignani V."/>
            <person name="Pizza M."/>
            <person name="Grandi G."/>
            <person name="Sun L."/>
            <person name="Smith H.O."/>
            <person name="Fraser C.M."/>
            <person name="Moxon E.R."/>
            <person name="Rappuoli R."/>
            <person name="Venter J.C."/>
        </authorList>
    </citation>
    <scope>NUCLEOTIDE SEQUENCE [LARGE SCALE GENOMIC DNA]</scope>
    <source>
        <strain>ATCC BAA-335 / MC58</strain>
    </source>
</reference>
<proteinExistence type="inferred from homology"/>
<keyword id="KW-0067">ATP-binding</keyword>
<keyword id="KW-0997">Cell inner membrane</keyword>
<keyword id="KW-1003">Cell membrane</keyword>
<keyword id="KW-0472">Membrane</keyword>
<keyword id="KW-0547">Nucleotide-binding</keyword>
<keyword id="KW-1185">Reference proteome</keyword>
<keyword id="KW-1278">Translocase</keyword>
<keyword id="KW-0813">Transport</keyword>
<comment type="function">
    <text evidence="1">Part of the ABC transporter complex LolCDE involved in the translocation of mature outer membrane-directed lipoproteins, from the inner membrane to the periplasmic chaperone, LolA. Responsible for the formation of the LolA-lipoprotein complex in an ATP-dependent manner.</text>
</comment>
<comment type="subunit">
    <text evidence="1">The complex is composed of two ATP-binding proteins (LolD) and two transmembrane proteins (LolC and LolE).</text>
</comment>
<comment type="subcellular location">
    <subcellularLocation>
        <location evidence="1">Cell inner membrane</location>
        <topology evidence="1">Peripheral membrane protein</topology>
    </subcellularLocation>
</comment>
<comment type="similarity">
    <text evidence="1">Belongs to the ABC transporter superfamily. Lipoprotein translocase (TC 3.A.1.125) family.</text>
</comment>
<evidence type="ECO:0000255" key="1">
    <source>
        <dbReference type="HAMAP-Rule" id="MF_01708"/>
    </source>
</evidence>
<accession>P57031</accession>
<sequence length="231" mass="25216">MSELILKCEGVGKRYRDGGLDVRVLHGLDLEIHAGESTGIIGSSGSGKSTLLHILGGLDMPSEGRVLLMGEDLRTLNQRRLGDLRNRHLGFVYQFHHLLPEFSALENVMMPLLIGKKSREEAAEAAMAMLEKVGLKHRSTHRAGELSGGERQRAAIARALVTQPKCLLADEPTGNLDRANARNVLDMMLELKTELGTGLVVVTHDDELAGRFERVMVMKDGSLHPKQGANA</sequence>
<organism>
    <name type="scientific">Neisseria meningitidis serogroup B (strain ATCC BAA-335 / MC58)</name>
    <dbReference type="NCBI Taxonomy" id="122586"/>
    <lineage>
        <taxon>Bacteria</taxon>
        <taxon>Pseudomonadati</taxon>
        <taxon>Pseudomonadota</taxon>
        <taxon>Betaproteobacteria</taxon>
        <taxon>Neisseriales</taxon>
        <taxon>Neisseriaceae</taxon>
        <taxon>Neisseria</taxon>
    </lineage>
</organism>
<gene>
    <name evidence="1" type="primary">lolD</name>
    <name type="synonym">lolB</name>
    <name type="ordered locus">NMB1234</name>
</gene>
<feature type="chain" id="PRO_0000092443" description="Lipoprotein-releasing system ATP-binding protein LolD">
    <location>
        <begin position="1"/>
        <end position="231"/>
    </location>
</feature>
<feature type="domain" description="ABC transporter" evidence="1">
    <location>
        <begin position="6"/>
        <end position="231"/>
    </location>
</feature>
<feature type="binding site" evidence="1">
    <location>
        <begin position="42"/>
        <end position="49"/>
    </location>
    <ligand>
        <name>ATP</name>
        <dbReference type="ChEBI" id="CHEBI:30616"/>
    </ligand>
</feature>